<gene>
    <name type="primary">FAM222B</name>
    <name type="synonym">C17orf63</name>
</gene>
<protein>
    <recommendedName>
        <fullName>Protein FAM222B</fullName>
    </recommendedName>
</protein>
<comment type="interaction">
    <interactant intactId="EBI-2807642">
        <id>Q8WU58</id>
    </interactant>
    <interactant intactId="EBI-11976299">
        <id>Q5BKX5-3</id>
        <label>ACTMAP</label>
    </interactant>
    <organismsDiffer>false</organismsDiffer>
    <experiments>3</experiments>
</comment>
<comment type="interaction">
    <interactant intactId="EBI-2807642">
        <id>Q8WU58</id>
    </interactant>
    <interactant intactId="EBI-357530">
        <id>Q9ULX6</id>
        <label>AKAP8L</label>
    </interactant>
    <organismsDiffer>false</organismsDiffer>
    <experiments>3</experiments>
</comment>
<comment type="interaction">
    <interactant intactId="EBI-2807642">
        <id>Q8WU58</id>
    </interactant>
    <interactant intactId="EBI-12102070">
        <id>Q9NXR5-2</id>
        <label>ANKRD10</label>
    </interactant>
    <organismsDiffer>false</organismsDiffer>
    <experiments>3</experiments>
</comment>
<comment type="interaction">
    <interactant intactId="EBI-2807642">
        <id>Q8WU58</id>
    </interactant>
    <interactant intactId="EBI-2949658">
        <id>O95429</id>
        <label>BAG4</label>
    </interactant>
    <organismsDiffer>false</organismsDiffer>
    <experiments>3</experiments>
</comment>
<comment type="interaction">
    <interactant intactId="EBI-2807642">
        <id>Q8WU58</id>
    </interactant>
    <interactant intactId="EBI-11524452">
        <id>Q8N9N5-2</id>
        <label>BANP</label>
    </interactant>
    <organismsDiffer>false</organismsDiffer>
    <experiments>3</experiments>
</comment>
<comment type="interaction">
    <interactant intactId="EBI-2807642">
        <id>Q8WU58</id>
    </interactant>
    <interactant intactId="EBI-953896">
        <id>Q9NP55</id>
        <label>BPIFA1</label>
    </interactant>
    <organismsDiffer>false</organismsDiffer>
    <experiments>3</experiments>
</comment>
<comment type="interaction">
    <interactant intactId="EBI-2807642">
        <id>Q8WU58</id>
    </interactant>
    <interactant intactId="EBI-12809220">
        <id>Q5SWW7</id>
        <label>C10orf55</label>
    </interactant>
    <organismsDiffer>false</organismsDiffer>
    <experiments>3</experiments>
</comment>
<comment type="interaction">
    <interactant intactId="EBI-2807642">
        <id>Q8WU58</id>
    </interactant>
    <interactant intactId="EBI-1773949">
        <id>Q9BXL8</id>
        <label>CDCA4</label>
    </interactant>
    <organismsDiffer>false</organismsDiffer>
    <experiments>3</experiments>
</comment>
<comment type="interaction">
    <interactant intactId="EBI-2807642">
        <id>Q8WU58</id>
    </interactant>
    <interactant intactId="EBI-12819063">
        <id>Q9BYD5</id>
        <label>CNFN</label>
    </interactant>
    <organismsDiffer>false</organismsDiffer>
    <experiments>3</experiments>
</comment>
<comment type="interaction">
    <interactant intactId="EBI-2807642">
        <id>Q8WU58</id>
    </interactant>
    <interactant intactId="EBI-3867333">
        <id>A8MQ03</id>
        <label>CYSRT1</label>
    </interactant>
    <organismsDiffer>false</organismsDiffer>
    <experiments>3</experiments>
</comment>
<comment type="interaction">
    <interactant intactId="EBI-2807642">
        <id>Q8WU58</id>
    </interactant>
    <interactant intactId="EBI-711990">
        <id>O00303</id>
        <label>EIF3F</label>
    </interactant>
    <organismsDiffer>false</organismsDiffer>
    <experiments>3</experiments>
</comment>
<comment type="interaction">
    <interactant intactId="EBI-2807642">
        <id>Q8WU58</id>
    </interactant>
    <interactant intactId="EBI-12193763">
        <id>A1KXE4-2</id>
        <label>FAM168B</label>
    </interactant>
    <organismsDiffer>false</organismsDiffer>
    <experiments>3</experiments>
</comment>
<comment type="interaction">
    <interactant intactId="EBI-2807642">
        <id>Q8WU58</id>
    </interactant>
    <interactant intactId="EBI-741101">
        <id>Q13643</id>
        <label>FHL3</label>
    </interactant>
    <organismsDiffer>false</organismsDiffer>
    <experiments>3</experiments>
</comment>
<comment type="interaction">
    <interactant intactId="EBI-2807642">
        <id>Q8WU58</id>
    </interactant>
    <interactant intactId="EBI-2806743">
        <id>P53539</id>
        <label>FOSB</label>
    </interactant>
    <organismsDiffer>false</organismsDiffer>
    <experiments>3</experiments>
</comment>
<comment type="interaction">
    <interactant intactId="EBI-2807642">
        <id>Q8WU58</id>
    </interactant>
    <interactant intactId="EBI-748258">
        <id>Q5TA45</id>
        <label>INTS11</label>
    </interactant>
    <organismsDiffer>false</organismsDiffer>
    <experiments>3</experiments>
</comment>
<comment type="interaction">
    <interactant intactId="EBI-2807642">
        <id>Q8WU58</id>
    </interactant>
    <interactant intactId="EBI-1052037">
        <id>Q8IUC1</id>
        <label>KRTAP11-1</label>
    </interactant>
    <organismsDiffer>false</organismsDiffer>
    <experiments>3</experiments>
</comment>
<comment type="interaction">
    <interactant intactId="EBI-2807642">
        <id>Q8WU58</id>
    </interactant>
    <interactant intactId="EBI-3957672">
        <id>Q6PEX3</id>
        <label>KRTAP26-1</label>
    </interactant>
    <organismsDiffer>false</organismsDiffer>
    <experiments>3</experiments>
</comment>
<comment type="interaction">
    <interactant intactId="EBI-2807642">
        <id>Q8WU58</id>
    </interactant>
    <interactant intactId="EBI-9996449">
        <id>Q9BYR8</id>
        <label>KRTAP3-1</label>
    </interactant>
    <organismsDiffer>false</organismsDiffer>
    <experiments>3</experiments>
</comment>
<comment type="interaction">
    <interactant intactId="EBI-2807642">
        <id>Q8WU58</id>
    </interactant>
    <interactant intactId="EBI-2350424">
        <id>Q9BV99</id>
        <label>LRRC61</label>
    </interactant>
    <organismsDiffer>false</organismsDiffer>
    <experiments>3</experiments>
</comment>
<comment type="interaction">
    <interactant intactId="EBI-2807642">
        <id>Q8WU58</id>
    </interactant>
    <interactant intactId="EBI-536879">
        <id>O43482</id>
        <label>OIP5</label>
    </interactant>
    <organismsDiffer>false</organismsDiffer>
    <experiments>3</experiments>
</comment>
<comment type="interaction">
    <interactant intactId="EBI-2807642">
        <id>Q8WU58</id>
    </interactant>
    <interactant intactId="EBI-372861">
        <id>P50479</id>
        <label>PDLIM4</label>
    </interactant>
    <organismsDiffer>false</organismsDiffer>
    <experiments>3</experiments>
</comment>
<comment type="interaction">
    <interactant intactId="EBI-2807642">
        <id>Q8WU58</id>
    </interactant>
    <interactant intactId="EBI-357275">
        <id>Q99471</id>
        <label>PFDN5</label>
    </interactant>
    <organismsDiffer>false</organismsDiffer>
    <experiments>3</experiments>
</comment>
<comment type="interaction">
    <interactant intactId="EBI-2807642">
        <id>Q8WU58</id>
    </interactant>
    <interactant intactId="EBI-726466">
        <id>O15496</id>
        <label>PLA2G10</label>
    </interactant>
    <organismsDiffer>false</organismsDiffer>
    <experiments>3</experiments>
</comment>
<comment type="interaction">
    <interactant intactId="EBI-2807642">
        <id>Q8WU58</id>
    </interactant>
    <interactant intactId="EBI-12754095">
        <id>P86480</id>
        <label>PRR20D</label>
    </interactant>
    <organismsDiffer>false</organismsDiffer>
    <experiments>3</experiments>
</comment>
<comment type="interaction">
    <interactant intactId="EBI-2807642">
        <id>Q8WU58</id>
    </interactant>
    <interactant intactId="EBI-12001422">
        <id>Q01196-8</id>
        <label>RUNX1</label>
    </interactant>
    <organismsDiffer>false</organismsDiffer>
    <experiments>3</experiments>
</comment>
<comment type="interaction">
    <interactant intactId="EBI-2807642">
        <id>Q8WU58</id>
    </interactant>
    <interactant intactId="EBI-12275818">
        <id>Q53HV7-2</id>
        <label>SMUG1</label>
    </interactant>
    <organismsDiffer>false</organismsDiffer>
    <experiments>3</experiments>
</comment>
<comment type="interaction">
    <interactant intactId="EBI-2807642">
        <id>Q8WU58</id>
    </interactant>
    <interactant intactId="EBI-12288855">
        <id>Q5JUK2</id>
        <label>SOHLH1</label>
    </interactant>
    <organismsDiffer>false</organismsDiffer>
    <experiments>3</experiments>
</comment>
<comment type="interaction">
    <interactant intactId="EBI-2807642">
        <id>Q8WU58</id>
    </interactant>
    <interactant intactId="EBI-11959123">
        <id>Q99932-2</id>
        <label>SPAG8</label>
    </interactant>
    <organismsDiffer>false</organismsDiffer>
    <experiments>3</experiments>
</comment>
<comment type="interaction">
    <interactant intactId="EBI-2807642">
        <id>Q8WU58</id>
    </interactant>
    <interactant intactId="EBI-742327">
        <id>Q15654</id>
        <label>TRIP6</label>
    </interactant>
    <organismsDiffer>false</organismsDiffer>
    <experiments>3</experiments>
</comment>
<comment type="interaction">
    <interactant intactId="EBI-2807642">
        <id>Q8WU58</id>
    </interactant>
    <interactant intactId="EBI-12806590">
        <id>Q86WV8</id>
        <label>TSC1</label>
    </interactant>
    <organismsDiffer>false</organismsDiffer>
    <experiments>3</experiments>
</comment>
<comment type="interaction">
    <interactant intactId="EBI-2807642">
        <id>Q8WU58</id>
    </interactant>
    <interactant intactId="EBI-923010">
        <id>Q14166</id>
        <label>TTLL12</label>
    </interactant>
    <organismsDiffer>false</organismsDiffer>
    <experiments>3</experiments>
</comment>
<comment type="interaction">
    <interactant intactId="EBI-2807642">
        <id>Q8WU58</id>
    </interactant>
    <interactant intactId="EBI-947187">
        <id>Q9UHD9</id>
        <label>UBQLN2</label>
    </interactant>
    <organismsDiffer>false</organismsDiffer>
    <experiments>3</experiments>
</comment>
<comment type="interaction">
    <interactant intactId="EBI-2807642">
        <id>Q8WU58</id>
    </interactant>
    <interactant intactId="EBI-12068150">
        <id>Q6NVU6</id>
        <label>UFSP1</label>
    </interactant>
    <organismsDiffer>false</organismsDiffer>
    <experiments>3</experiments>
</comment>
<comment type="interaction">
    <interactant intactId="EBI-2807642">
        <id>Q8WU58</id>
    </interactant>
    <interactant intactId="EBI-12040603">
        <id>Q9NZC7-5</id>
        <label>WWOX</label>
    </interactant>
    <organismsDiffer>false</organismsDiffer>
    <experiments>5</experiments>
</comment>
<comment type="interaction">
    <interactant intactId="EBI-2807642">
        <id>Q8WU58</id>
    </interactant>
    <interactant intactId="EBI-12030590">
        <id>Q9H0C1</id>
        <label>ZMYND12</label>
    </interactant>
    <organismsDiffer>false</organismsDiffer>
    <experiments>3</experiments>
</comment>
<comment type="interaction">
    <interactant intactId="EBI-2807642">
        <id>Q8WU58</id>
    </interactant>
    <interactant intactId="EBI-10177989">
        <id>G4XUV3</id>
    </interactant>
    <organismsDiffer>false</organismsDiffer>
    <experiments>3</experiments>
</comment>
<comment type="similarity">
    <text evidence="2">Belongs to the FAM222 family.</text>
</comment>
<comment type="sequence caution" evidence="2">
    <conflict type="frameshift">
        <sequence resource="EMBL-CDS" id="BAA90974"/>
    </conflict>
</comment>
<comment type="sequence caution" evidence="2">
    <conflict type="erroneous initiation">
        <sequence resource="EMBL-CDS" id="BAB15306"/>
    </conflict>
    <text>Truncated N-terminus.</text>
</comment>
<dbReference type="EMBL" id="AK000147">
    <property type="protein sequence ID" value="BAA90974.1"/>
    <property type="status" value="ALT_FRAME"/>
    <property type="molecule type" value="mRNA"/>
</dbReference>
<dbReference type="EMBL" id="AK001562">
    <property type="protein sequence ID" value="BAA91757.1"/>
    <property type="molecule type" value="mRNA"/>
</dbReference>
<dbReference type="EMBL" id="AK025980">
    <property type="protein sequence ID" value="BAB15306.1"/>
    <property type="status" value="ALT_INIT"/>
    <property type="molecule type" value="mRNA"/>
</dbReference>
<dbReference type="EMBL" id="AC010761">
    <property type="status" value="NOT_ANNOTATED_CDS"/>
    <property type="molecule type" value="Genomic_DNA"/>
</dbReference>
<dbReference type="EMBL" id="AC024267">
    <property type="status" value="NOT_ANNOTATED_CDS"/>
    <property type="molecule type" value="Genomic_DNA"/>
</dbReference>
<dbReference type="EMBL" id="BC021228">
    <property type="protein sequence ID" value="AAH21228.1"/>
    <property type="molecule type" value="mRNA"/>
</dbReference>
<dbReference type="CCDS" id="CCDS45637.1"/>
<dbReference type="RefSeq" id="NP_001070966.1">
    <property type="nucleotide sequence ID" value="NM_001077498.3"/>
</dbReference>
<dbReference type="RefSeq" id="NP_001275560.1">
    <property type="nucleotide sequence ID" value="NM_001288631.1"/>
</dbReference>
<dbReference type="RefSeq" id="NP_001275561.1">
    <property type="nucleotide sequence ID" value="NM_001288632.2"/>
</dbReference>
<dbReference type="RefSeq" id="NP_001275562.1">
    <property type="nucleotide sequence ID" value="NM_001288633.2"/>
</dbReference>
<dbReference type="RefSeq" id="NP_001275563.1">
    <property type="nucleotide sequence ID" value="NM_001288634.2"/>
</dbReference>
<dbReference type="RefSeq" id="NP_001275564.1">
    <property type="nucleotide sequence ID" value="NM_001288635.2"/>
</dbReference>
<dbReference type="RefSeq" id="NP_001275565.1">
    <property type="nucleotide sequence ID" value="NM_001288636.1"/>
</dbReference>
<dbReference type="RefSeq" id="NP_001275566.1">
    <property type="nucleotide sequence ID" value="NM_001288637.1"/>
</dbReference>
<dbReference type="RefSeq" id="NP_001275567.1">
    <property type="nucleotide sequence ID" value="NM_001288638.1"/>
</dbReference>
<dbReference type="RefSeq" id="NP_001275568.1">
    <property type="nucleotide sequence ID" value="NM_001288639.1"/>
</dbReference>
<dbReference type="RefSeq" id="NP_001275569.1">
    <property type="nucleotide sequence ID" value="NM_001288640.1"/>
</dbReference>
<dbReference type="RefSeq" id="NP_060652.2">
    <property type="nucleotide sequence ID" value="NM_018182.4"/>
</dbReference>
<dbReference type="RefSeq" id="XP_016880320.1">
    <property type="nucleotide sequence ID" value="XM_017024831.1"/>
</dbReference>
<dbReference type="RefSeq" id="XP_016880321.1">
    <property type="nucleotide sequence ID" value="XM_017024832.1"/>
</dbReference>
<dbReference type="RefSeq" id="XP_016880322.1">
    <property type="nucleotide sequence ID" value="XM_017024833.1"/>
</dbReference>
<dbReference type="RefSeq" id="XP_016880323.1">
    <property type="nucleotide sequence ID" value="XM_017024834.1"/>
</dbReference>
<dbReference type="RefSeq" id="XP_047292327.1">
    <property type="nucleotide sequence ID" value="XM_047436371.1"/>
</dbReference>
<dbReference type="RefSeq" id="XP_047292328.1">
    <property type="nucleotide sequence ID" value="XM_047436372.1"/>
</dbReference>
<dbReference type="RefSeq" id="XP_047292329.1">
    <property type="nucleotide sequence ID" value="XM_047436373.1"/>
</dbReference>
<dbReference type="RefSeq" id="XP_047292330.1">
    <property type="nucleotide sequence ID" value="XM_047436374.1"/>
</dbReference>
<dbReference type="RefSeq" id="XP_047292331.1">
    <property type="nucleotide sequence ID" value="XM_047436375.1"/>
</dbReference>
<dbReference type="RefSeq" id="XP_047292332.1">
    <property type="nucleotide sequence ID" value="XM_047436376.1"/>
</dbReference>
<dbReference type="RefSeq" id="XP_047292333.1">
    <property type="nucleotide sequence ID" value="XM_047436377.1"/>
</dbReference>
<dbReference type="RefSeq" id="XP_047292334.1">
    <property type="nucleotide sequence ID" value="XM_047436378.1"/>
</dbReference>
<dbReference type="RefSeq" id="XP_047292335.1">
    <property type="nucleotide sequence ID" value="XM_047436379.1"/>
</dbReference>
<dbReference type="RefSeq" id="XP_047292336.1">
    <property type="nucleotide sequence ID" value="XM_047436380.1"/>
</dbReference>
<dbReference type="RefSeq" id="XP_047292337.1">
    <property type="nucleotide sequence ID" value="XM_047436381.1"/>
</dbReference>
<dbReference type="RefSeq" id="XP_047292338.1">
    <property type="nucleotide sequence ID" value="XM_047436382.1"/>
</dbReference>
<dbReference type="RefSeq" id="XP_047292339.1">
    <property type="nucleotide sequence ID" value="XM_047436383.1"/>
</dbReference>
<dbReference type="RefSeq" id="XP_047292340.1">
    <property type="nucleotide sequence ID" value="XM_047436384.1"/>
</dbReference>
<dbReference type="RefSeq" id="XP_047292341.1">
    <property type="nucleotide sequence ID" value="XM_047436385.1"/>
</dbReference>
<dbReference type="RefSeq" id="XP_047292342.1">
    <property type="nucleotide sequence ID" value="XM_047436386.1"/>
</dbReference>
<dbReference type="BioGRID" id="120850">
    <property type="interactions" value="43"/>
</dbReference>
<dbReference type="FunCoup" id="Q8WU58">
    <property type="interactions" value="1379"/>
</dbReference>
<dbReference type="IntAct" id="Q8WU58">
    <property type="interactions" value="40"/>
</dbReference>
<dbReference type="STRING" id="9606.ENSP00000462419"/>
<dbReference type="GlyGen" id="Q8WU58">
    <property type="glycosylation" value="5 sites, 1 O-linked glycan (2 sites)"/>
</dbReference>
<dbReference type="iPTMnet" id="Q8WU58"/>
<dbReference type="PhosphoSitePlus" id="Q8WU58"/>
<dbReference type="BioMuta" id="FAM222B"/>
<dbReference type="DMDM" id="74730670"/>
<dbReference type="jPOST" id="Q8WU58"/>
<dbReference type="MassIVE" id="Q8WU58"/>
<dbReference type="PaxDb" id="9606-ENSP00000462419"/>
<dbReference type="PeptideAtlas" id="Q8WU58"/>
<dbReference type="ProteomicsDB" id="74633"/>
<dbReference type="Antibodypedia" id="63797">
    <property type="antibodies" value="48 antibodies from 12 providers"/>
</dbReference>
<dbReference type="DNASU" id="55731"/>
<dbReference type="Ensembl" id="ENST00000452648.8">
    <property type="protein sequence ID" value="ENSP00000413645.3"/>
    <property type="gene ID" value="ENSG00000173065.14"/>
</dbReference>
<dbReference type="Ensembl" id="ENST00000577376.6">
    <property type="protein sequence ID" value="ENSP00000464355.2"/>
    <property type="gene ID" value="ENSG00000173065.14"/>
</dbReference>
<dbReference type="Ensembl" id="ENST00000577513.6">
    <property type="protein sequence ID" value="ENSP00000463642.2"/>
    <property type="gene ID" value="ENSG00000173065.14"/>
</dbReference>
<dbReference type="Ensembl" id="ENST00000581229.6">
    <property type="protein sequence ID" value="ENSP00000464299.2"/>
    <property type="gene ID" value="ENSG00000173065.14"/>
</dbReference>
<dbReference type="Ensembl" id="ENST00000581407.6">
    <property type="protein sequence ID" value="ENSP00000462419.1"/>
    <property type="gene ID" value="ENSG00000173065.14"/>
</dbReference>
<dbReference type="Ensembl" id="ENST00000583307.6">
    <property type="protein sequence ID" value="ENSP00000463296.2"/>
    <property type="gene ID" value="ENSG00000173065.14"/>
</dbReference>
<dbReference type="GeneID" id="55731"/>
<dbReference type="KEGG" id="hsa:55731"/>
<dbReference type="MANE-Select" id="ENST00000581407.6">
    <property type="protein sequence ID" value="ENSP00000462419.1"/>
    <property type="RefSeq nucleotide sequence ID" value="NM_001077498.3"/>
    <property type="RefSeq protein sequence ID" value="NP_001070966.1"/>
</dbReference>
<dbReference type="UCSC" id="uc002hct.2">
    <property type="organism name" value="human"/>
</dbReference>
<dbReference type="AGR" id="HGNC:25563"/>
<dbReference type="CTD" id="55731"/>
<dbReference type="DisGeNET" id="55731"/>
<dbReference type="GeneCards" id="FAM222B"/>
<dbReference type="HGNC" id="HGNC:25563">
    <property type="gene designation" value="FAM222B"/>
</dbReference>
<dbReference type="HPA" id="ENSG00000173065">
    <property type="expression patterns" value="Tissue enhanced (skeletal)"/>
</dbReference>
<dbReference type="neXtProt" id="NX_Q8WU58"/>
<dbReference type="OpenTargets" id="ENSG00000173065"/>
<dbReference type="PharmGKB" id="PA142672246"/>
<dbReference type="VEuPathDB" id="HostDB:ENSG00000173065"/>
<dbReference type="eggNOG" id="ENOG502QQED">
    <property type="taxonomic scope" value="Eukaryota"/>
</dbReference>
<dbReference type="GeneTree" id="ENSGT00530000063811"/>
<dbReference type="HOGENOM" id="CLU_027495_0_0_1"/>
<dbReference type="InParanoid" id="Q8WU58"/>
<dbReference type="OMA" id="MTHYTNG"/>
<dbReference type="OrthoDB" id="8950865at2759"/>
<dbReference type="PAN-GO" id="Q8WU58">
    <property type="GO annotations" value="0 GO annotations based on evolutionary models"/>
</dbReference>
<dbReference type="PhylomeDB" id="Q8WU58"/>
<dbReference type="TreeFam" id="TF331508"/>
<dbReference type="PathwayCommons" id="Q8WU58"/>
<dbReference type="SignaLink" id="Q8WU58"/>
<dbReference type="BioGRID-ORCS" id="55731">
    <property type="hits" value="13 hits in 1159 CRISPR screens"/>
</dbReference>
<dbReference type="ChiTaRS" id="FAM222B">
    <property type="organism name" value="human"/>
</dbReference>
<dbReference type="GenomeRNAi" id="55731"/>
<dbReference type="Pharos" id="Q8WU58">
    <property type="development level" value="Tdark"/>
</dbReference>
<dbReference type="PRO" id="PR:Q8WU58"/>
<dbReference type="Proteomes" id="UP000005640">
    <property type="component" value="Chromosome 17"/>
</dbReference>
<dbReference type="RNAct" id="Q8WU58">
    <property type="molecule type" value="protein"/>
</dbReference>
<dbReference type="Bgee" id="ENSG00000173065">
    <property type="expression patterns" value="Expressed in sperm and 211 other cell types or tissues"/>
</dbReference>
<dbReference type="ExpressionAtlas" id="Q8WU58">
    <property type="expression patterns" value="baseline and differential"/>
</dbReference>
<dbReference type="GO" id="GO:0005739">
    <property type="term" value="C:mitochondrion"/>
    <property type="evidence" value="ECO:0006056"/>
    <property type="project" value="FlyBase"/>
</dbReference>
<dbReference type="GO" id="GO:0005654">
    <property type="term" value="C:nucleoplasm"/>
    <property type="evidence" value="ECO:0000314"/>
    <property type="project" value="HPA"/>
</dbReference>
<dbReference type="InterPro" id="IPR029340">
    <property type="entry name" value="FAM222"/>
</dbReference>
<dbReference type="PANTHER" id="PTHR16070">
    <property type="entry name" value="PROTEIN FAM222A-RELATED"/>
    <property type="match status" value="1"/>
</dbReference>
<dbReference type="PANTHER" id="PTHR16070:SF1">
    <property type="entry name" value="PROTEIN FAM222B"/>
    <property type="match status" value="1"/>
</dbReference>
<dbReference type="Pfam" id="PF15258">
    <property type="entry name" value="FAM222A"/>
    <property type="match status" value="1"/>
</dbReference>
<evidence type="ECO:0000256" key="1">
    <source>
        <dbReference type="SAM" id="MobiDB-lite"/>
    </source>
</evidence>
<evidence type="ECO:0000305" key="2"/>
<proteinExistence type="evidence at protein level"/>
<accession>Q8WU58</accession>
<accession>Q9H6F3</accession>
<accession>Q9NVJ4</accession>
<accession>Q9NXN6</accession>
<organism>
    <name type="scientific">Homo sapiens</name>
    <name type="common">Human</name>
    <dbReference type="NCBI Taxonomy" id="9606"/>
    <lineage>
        <taxon>Eukaryota</taxon>
        <taxon>Metazoa</taxon>
        <taxon>Chordata</taxon>
        <taxon>Craniata</taxon>
        <taxon>Vertebrata</taxon>
        <taxon>Euteleostomi</taxon>
        <taxon>Mammalia</taxon>
        <taxon>Eutheria</taxon>
        <taxon>Euarchontoglires</taxon>
        <taxon>Primates</taxon>
        <taxon>Haplorrhini</taxon>
        <taxon>Catarrhini</taxon>
        <taxon>Hominidae</taxon>
        <taxon>Homo</taxon>
    </lineage>
</organism>
<sequence length="562" mass="59652">MLACLPGPGDLSFQLLSHTQMNTGLQKWDTTQKMRTAHYPTPAELDAYAKKVANNPLTIKIFPNSVKVPQRKHVRRTVNGLDTSAQRYSPYPTQAATKAGLLAIVKVPAKSILKDFDGTRARLLPEAIMNPPVAPYATVAPSTLAHPQAQALARQQALQHAQTLAHAPPQTLQHPQGIPPPQALSHPQSLQQPQGLGHPQPMAQTQGLVHPQALAHQGLQHPHNPLLHGGRKMPDSDAPPNVTVSTSTIPLSMAATLQHSQPPDLSSIVHQINQFCQTRAGISTTSVCEGQIANPSPISRSLLINASTRVSTHSVPTPMPSCVVNPMEHTHAATAALPAAGPVNLPTGISRVPTGYPSDLKPVTWNQHQLAHLQQMCSEASGTPAPGLTGKHAAGRELAGPGFVGKAPAYPQELCLAQSFHLKPPLEKPTPSPPVNGMAAPLAYPNGHYFQPLWNNILPTPNSDSSGSQDLAMPFHGGQPTGAPLDCAAAPGAHYRAGTGGGPVASQNSLMQTVDYLSGDFQQACFREQSLAMLSKAHRAPGNRAPDPTESRSLHIQHPGYR</sequence>
<name>F222B_HUMAN</name>
<keyword id="KW-1267">Proteomics identification</keyword>
<keyword id="KW-1185">Reference proteome</keyword>
<reference key="1">
    <citation type="journal article" date="2004" name="Nat. Genet.">
        <title>Complete sequencing and characterization of 21,243 full-length human cDNAs.</title>
        <authorList>
            <person name="Ota T."/>
            <person name="Suzuki Y."/>
            <person name="Nishikawa T."/>
            <person name="Otsuki T."/>
            <person name="Sugiyama T."/>
            <person name="Irie R."/>
            <person name="Wakamatsu A."/>
            <person name="Hayashi K."/>
            <person name="Sato H."/>
            <person name="Nagai K."/>
            <person name="Kimura K."/>
            <person name="Makita H."/>
            <person name="Sekine M."/>
            <person name="Obayashi M."/>
            <person name="Nishi T."/>
            <person name="Shibahara T."/>
            <person name="Tanaka T."/>
            <person name="Ishii S."/>
            <person name="Yamamoto J."/>
            <person name="Saito K."/>
            <person name="Kawai Y."/>
            <person name="Isono Y."/>
            <person name="Nakamura Y."/>
            <person name="Nagahari K."/>
            <person name="Murakami K."/>
            <person name="Yasuda T."/>
            <person name="Iwayanagi T."/>
            <person name="Wagatsuma M."/>
            <person name="Shiratori A."/>
            <person name="Sudo H."/>
            <person name="Hosoiri T."/>
            <person name="Kaku Y."/>
            <person name="Kodaira H."/>
            <person name="Kondo H."/>
            <person name="Sugawara M."/>
            <person name="Takahashi M."/>
            <person name="Kanda K."/>
            <person name="Yokoi T."/>
            <person name="Furuya T."/>
            <person name="Kikkawa E."/>
            <person name="Omura Y."/>
            <person name="Abe K."/>
            <person name="Kamihara K."/>
            <person name="Katsuta N."/>
            <person name="Sato K."/>
            <person name="Tanikawa M."/>
            <person name="Yamazaki M."/>
            <person name="Ninomiya K."/>
            <person name="Ishibashi T."/>
            <person name="Yamashita H."/>
            <person name="Murakawa K."/>
            <person name="Fujimori K."/>
            <person name="Tanai H."/>
            <person name="Kimata M."/>
            <person name="Watanabe M."/>
            <person name="Hiraoka S."/>
            <person name="Chiba Y."/>
            <person name="Ishida S."/>
            <person name="Ono Y."/>
            <person name="Takiguchi S."/>
            <person name="Watanabe S."/>
            <person name="Yosida M."/>
            <person name="Hotuta T."/>
            <person name="Kusano J."/>
            <person name="Kanehori K."/>
            <person name="Takahashi-Fujii A."/>
            <person name="Hara H."/>
            <person name="Tanase T.-O."/>
            <person name="Nomura Y."/>
            <person name="Togiya S."/>
            <person name="Komai F."/>
            <person name="Hara R."/>
            <person name="Takeuchi K."/>
            <person name="Arita M."/>
            <person name="Imose N."/>
            <person name="Musashino K."/>
            <person name="Yuuki H."/>
            <person name="Oshima A."/>
            <person name="Sasaki N."/>
            <person name="Aotsuka S."/>
            <person name="Yoshikawa Y."/>
            <person name="Matsunawa H."/>
            <person name="Ichihara T."/>
            <person name="Shiohata N."/>
            <person name="Sano S."/>
            <person name="Moriya S."/>
            <person name="Momiyama H."/>
            <person name="Satoh N."/>
            <person name="Takami S."/>
            <person name="Terashima Y."/>
            <person name="Suzuki O."/>
            <person name="Nakagawa S."/>
            <person name="Senoh A."/>
            <person name="Mizoguchi H."/>
            <person name="Goto Y."/>
            <person name="Shimizu F."/>
            <person name="Wakebe H."/>
            <person name="Hishigaki H."/>
            <person name="Watanabe T."/>
            <person name="Sugiyama A."/>
            <person name="Takemoto M."/>
            <person name="Kawakami B."/>
            <person name="Yamazaki M."/>
            <person name="Watanabe K."/>
            <person name="Kumagai A."/>
            <person name="Itakura S."/>
            <person name="Fukuzumi Y."/>
            <person name="Fujimori Y."/>
            <person name="Komiyama M."/>
            <person name="Tashiro H."/>
            <person name="Tanigami A."/>
            <person name="Fujiwara T."/>
            <person name="Ono T."/>
            <person name="Yamada K."/>
            <person name="Fujii Y."/>
            <person name="Ozaki K."/>
            <person name="Hirao M."/>
            <person name="Ohmori Y."/>
            <person name="Kawabata A."/>
            <person name="Hikiji T."/>
            <person name="Kobatake N."/>
            <person name="Inagaki H."/>
            <person name="Ikema Y."/>
            <person name="Okamoto S."/>
            <person name="Okitani R."/>
            <person name="Kawakami T."/>
            <person name="Noguchi S."/>
            <person name="Itoh T."/>
            <person name="Shigeta K."/>
            <person name="Senba T."/>
            <person name="Matsumura K."/>
            <person name="Nakajima Y."/>
            <person name="Mizuno T."/>
            <person name="Morinaga M."/>
            <person name="Sasaki M."/>
            <person name="Togashi T."/>
            <person name="Oyama M."/>
            <person name="Hata H."/>
            <person name="Watanabe M."/>
            <person name="Komatsu T."/>
            <person name="Mizushima-Sugano J."/>
            <person name="Satoh T."/>
            <person name="Shirai Y."/>
            <person name="Takahashi Y."/>
            <person name="Nakagawa K."/>
            <person name="Okumura K."/>
            <person name="Nagase T."/>
            <person name="Nomura N."/>
            <person name="Kikuchi H."/>
            <person name="Masuho Y."/>
            <person name="Yamashita R."/>
            <person name="Nakai K."/>
            <person name="Yada T."/>
            <person name="Nakamura Y."/>
            <person name="Ohara O."/>
            <person name="Isogai T."/>
            <person name="Sugano S."/>
        </authorList>
    </citation>
    <scope>NUCLEOTIDE SEQUENCE [LARGE SCALE MRNA]</scope>
    <source>
        <tissue>Colon</tissue>
        <tissue>Kidney epithelium</tissue>
        <tissue>Teratocarcinoma</tissue>
    </source>
</reference>
<reference key="2">
    <citation type="journal article" date="2006" name="Nature">
        <title>DNA sequence of human chromosome 17 and analysis of rearrangement in the human lineage.</title>
        <authorList>
            <person name="Zody M.C."/>
            <person name="Garber M."/>
            <person name="Adams D.J."/>
            <person name="Sharpe T."/>
            <person name="Harrow J."/>
            <person name="Lupski J.R."/>
            <person name="Nicholson C."/>
            <person name="Searle S.M."/>
            <person name="Wilming L."/>
            <person name="Young S.K."/>
            <person name="Abouelleil A."/>
            <person name="Allen N.R."/>
            <person name="Bi W."/>
            <person name="Bloom T."/>
            <person name="Borowsky M.L."/>
            <person name="Bugalter B.E."/>
            <person name="Butler J."/>
            <person name="Chang J.L."/>
            <person name="Chen C.-K."/>
            <person name="Cook A."/>
            <person name="Corum B."/>
            <person name="Cuomo C.A."/>
            <person name="de Jong P.J."/>
            <person name="DeCaprio D."/>
            <person name="Dewar K."/>
            <person name="FitzGerald M."/>
            <person name="Gilbert J."/>
            <person name="Gibson R."/>
            <person name="Gnerre S."/>
            <person name="Goldstein S."/>
            <person name="Grafham D.V."/>
            <person name="Grocock R."/>
            <person name="Hafez N."/>
            <person name="Hagopian D.S."/>
            <person name="Hart E."/>
            <person name="Norman C.H."/>
            <person name="Humphray S."/>
            <person name="Jaffe D.B."/>
            <person name="Jones M."/>
            <person name="Kamal M."/>
            <person name="Khodiyar V.K."/>
            <person name="LaButti K."/>
            <person name="Laird G."/>
            <person name="Lehoczky J."/>
            <person name="Liu X."/>
            <person name="Lokyitsang T."/>
            <person name="Loveland J."/>
            <person name="Lui A."/>
            <person name="Macdonald P."/>
            <person name="Major J.E."/>
            <person name="Matthews L."/>
            <person name="Mauceli E."/>
            <person name="McCarroll S.A."/>
            <person name="Mihalev A.H."/>
            <person name="Mudge J."/>
            <person name="Nguyen C."/>
            <person name="Nicol R."/>
            <person name="O'Leary S.B."/>
            <person name="Osoegawa K."/>
            <person name="Schwartz D.C."/>
            <person name="Shaw-Smith C."/>
            <person name="Stankiewicz P."/>
            <person name="Steward C."/>
            <person name="Swarbreck D."/>
            <person name="Venkataraman V."/>
            <person name="Whittaker C.A."/>
            <person name="Yang X."/>
            <person name="Zimmer A.R."/>
            <person name="Bradley A."/>
            <person name="Hubbard T."/>
            <person name="Birren B.W."/>
            <person name="Rogers J."/>
            <person name="Lander E.S."/>
            <person name="Nusbaum C."/>
        </authorList>
    </citation>
    <scope>NUCLEOTIDE SEQUENCE [LARGE SCALE GENOMIC DNA]</scope>
</reference>
<reference key="3">
    <citation type="journal article" date="2004" name="Genome Res.">
        <title>The status, quality, and expansion of the NIH full-length cDNA project: the Mammalian Gene Collection (MGC).</title>
        <authorList>
            <consortium name="The MGC Project Team"/>
        </authorList>
    </citation>
    <scope>NUCLEOTIDE SEQUENCE [LARGE SCALE MRNA]</scope>
    <source>
        <tissue>Lung</tissue>
    </source>
</reference>
<feature type="chain" id="PRO_0000274245" description="Protein FAM222B">
    <location>
        <begin position="1"/>
        <end position="562"/>
    </location>
</feature>
<feature type="region of interest" description="Disordered" evidence="1">
    <location>
        <begin position="155"/>
        <end position="203"/>
    </location>
</feature>
<feature type="region of interest" description="Disordered" evidence="1">
    <location>
        <begin position="219"/>
        <end position="245"/>
    </location>
</feature>
<feature type="region of interest" description="Disordered" evidence="1">
    <location>
        <begin position="537"/>
        <end position="562"/>
    </location>
</feature>
<feature type="compositionally biased region" description="Low complexity" evidence="1">
    <location>
        <begin position="155"/>
        <end position="167"/>
    </location>
</feature>
<feature type="compositionally biased region" description="Low complexity" evidence="1">
    <location>
        <begin position="183"/>
        <end position="201"/>
    </location>
</feature>
<feature type="sequence variant" id="VAR_050900" description="In dbSNP:rs2043031.">
    <original>L</original>
    <variation>S</variation>
    <location>
        <position position="471"/>
    </location>
</feature>
<feature type="sequence variant" id="VAR_050901" description="In dbSNP:rs36029715.">
    <original>G</original>
    <variation>S</variation>
    <location>
        <position position="542"/>
    </location>
</feature>
<feature type="sequence conflict" description="In Ref. 1; BAA91757." evidence="2" ref="1">
    <original>L</original>
    <variation>P</variation>
    <location>
        <position position="15"/>
    </location>
</feature>
<feature type="sequence conflict" description="In Ref. 1; BAA91757." evidence="2" ref="1">
    <original>Q</original>
    <variation>R</variation>
    <location>
        <position position="261"/>
    </location>
</feature>
<feature type="sequence conflict" description="In Ref. 1; BAA91757." evidence="2" ref="1">
    <original>Q</original>
    <variation>L</variation>
    <location>
        <position position="557"/>
    </location>
</feature>